<organism>
    <name type="scientific">Methanothermobacter thermautotrophicus</name>
    <name type="common">Methanobacterium thermoformicicum</name>
    <dbReference type="NCBI Taxonomy" id="145262"/>
    <lineage>
        <taxon>Archaea</taxon>
        <taxon>Methanobacteriati</taxon>
        <taxon>Methanobacteriota</taxon>
        <taxon>Methanomada group</taxon>
        <taxon>Methanobacteria</taxon>
        <taxon>Methanobacteriales</taxon>
        <taxon>Methanobacteriaceae</taxon>
        <taxon>Methanothermobacter</taxon>
    </lineage>
</organism>
<name>YPZ11_METTF</name>
<dbReference type="EMBL" id="X68367">
    <property type="protein sequence ID" value="CAA48440.1"/>
    <property type="molecule type" value="Genomic_DNA"/>
</dbReference>
<dbReference type="PIR" id="S30316">
    <property type="entry name" value="S26450"/>
</dbReference>
<dbReference type="RefSeq" id="NP_039768.1">
    <property type="nucleotide sequence ID" value="NC_001337.1"/>
</dbReference>
<dbReference type="SMR" id="P29587"/>
<dbReference type="Gene3D" id="1.10.3680.10">
    <property type="entry name" value="TerB-like"/>
    <property type="match status" value="1"/>
</dbReference>
<dbReference type="InterPro" id="IPR029024">
    <property type="entry name" value="TerB-like"/>
</dbReference>
<dbReference type="SUPFAM" id="SSF158682">
    <property type="entry name" value="TerB-like"/>
    <property type="match status" value="1"/>
</dbReference>
<proteinExistence type="predicted"/>
<keyword id="KW-0614">Plasmid</keyword>
<protein>
    <recommendedName>
        <fullName>Uncharacterized protein ORF11'</fullName>
    </recommendedName>
</protein>
<reference key="1">
    <citation type="journal article" date="1992" name="Nucleic Acids Res.">
        <title>Modular organization of related Archaeal plasmids encoding different restriction-modification systems in Methanobacterium thermoformicicum.</title>
        <authorList>
            <person name="Noelling J."/>
            <person name="van Eeden F.J.M."/>
            <person name="Eggen R.I.L."/>
            <person name="de Vos W.M."/>
        </authorList>
    </citation>
    <scope>NUCLEOTIDE SEQUENCE [GENOMIC DNA]</scope>
    <source>
        <strain>DSM 3720 / Z-245</strain>
    </source>
</reference>
<sequence>MEFRRHFTTKEWLILQASPIWVGFLVAAADGHADPKEIDENLRQTIRAATFSTGFTKEVFEDHVYMHLNDDDALSAVVETLDPLEGLKAVSILLGKIPASEAENFKDTLRNMAFKIALVSDGIDKNEEAAIKLIDLILDGQFNLPFYY</sequence>
<geneLocation type="plasmid">
    <name>pFZ1</name>
</geneLocation>
<feature type="chain" id="PRO_0000066443" description="Uncharacterized protein ORF11'">
    <location>
        <begin position="1"/>
        <end position="148"/>
    </location>
</feature>
<accession>P29587</accession>